<comment type="function">
    <text evidence="1 3 5">DNA ligase that seals nicks in double-stranded DNA during DNA replication, DNA recombination and DNA repair (By similarity). Has weak intrinsic nick joining activities and accumulates DNA-adenylate. Acts as a backup for LigD in the Ku-LigD-dependent NHEJ pathway.</text>
</comment>
<comment type="catalytic activity">
    <reaction evidence="2">
        <text>ATP + (deoxyribonucleotide)n-3'-hydroxyl + 5'-phospho-(deoxyribonucleotide)m = (deoxyribonucleotide)n+m + AMP + diphosphate.</text>
        <dbReference type="EC" id="6.5.1.1"/>
    </reaction>
</comment>
<comment type="cofactor">
    <cofactor evidence="1">
        <name>a divalent metal cation</name>
        <dbReference type="ChEBI" id="CHEBI:60240"/>
    </cofactor>
</comment>
<comment type="disruption phenotype">
    <text evidence="4 5">Not essential; a double ligC1-ligC2 mutant grows normally, no effect on NHEJ. In a triple deletion with ligD NHEJ on blunt-ended plasmid is 90-fold impaired. In quadruple ligB-ligC1-ligC2-ligD deletions NHEJ on blunt and 5'-overhangs is 0.22 and 0.12% of wild-type respectively, only 4-fold decrease in 3'-overhang NHEJ.</text>
</comment>
<comment type="similarity">
    <text evidence="6">Belongs to the ATP-dependent DNA ligase family.</text>
</comment>
<accession>A0R5T2</accession>
<protein>
    <recommendedName>
        <fullName>DNA ligase C1</fullName>
        <ecNumber evidence="2">6.5.1.1</ecNumber>
    </recommendedName>
    <alternativeName>
        <fullName>Polydeoxyribonucleotide synthase [ATP]</fullName>
    </alternativeName>
</protein>
<sequence>MDLPVQPPIEPMLAKAQVKVPDEAGVWSYEPKWDGFRALVFRDGDDVVLQSRNGKDLGRYFPELLDALRDELVEKCVLDGEVVVPRDIAGRVRLDWESLSQRIHPAASRIKMLAEQTPAHFIGFDALALGDRSLLKEPFRVRREALAEAVDNKRWCHVTRTSEDPALGTEWLKTFEGAGLDGVIAKRLDGPYLPGKREMVKVKHHRDADCVAMGYRIHKSGDGIGSILLGLYRDDGELQMVGGAASFTAKDRIKLLAELEPLREGDEMREGDPSRWNSAADKRWTPLRPEKVCEVAYDQMEGNSVEGRRFRHAVKFLRWRPDREPSSCTFDQLDTPLNYDLYDVLEEQ</sequence>
<dbReference type="EC" id="6.5.1.1" evidence="2"/>
<dbReference type="EMBL" id="CP000480">
    <property type="protein sequence ID" value="ABK76125.1"/>
    <property type="molecule type" value="Genomic_DNA"/>
</dbReference>
<dbReference type="EMBL" id="CP001663">
    <property type="protein sequence ID" value="AFP42567.1"/>
    <property type="molecule type" value="Genomic_DNA"/>
</dbReference>
<dbReference type="RefSeq" id="YP_890520.1">
    <property type="nucleotide sequence ID" value="NC_008596.1"/>
</dbReference>
<dbReference type="SMR" id="A0R5T2"/>
<dbReference type="STRING" id="246196.MSMEG_6302"/>
<dbReference type="PaxDb" id="246196-MSMEI_6137"/>
<dbReference type="KEGG" id="msg:MSMEI_6137"/>
<dbReference type="KEGG" id="msm:MSMEG_6302"/>
<dbReference type="PATRIC" id="fig|246196.19.peg.6138"/>
<dbReference type="eggNOG" id="COG1793">
    <property type="taxonomic scope" value="Bacteria"/>
</dbReference>
<dbReference type="OrthoDB" id="9770771at2"/>
<dbReference type="Proteomes" id="UP000000757">
    <property type="component" value="Chromosome"/>
</dbReference>
<dbReference type="Proteomes" id="UP000006158">
    <property type="component" value="Chromosome"/>
</dbReference>
<dbReference type="GO" id="GO:0005524">
    <property type="term" value="F:ATP binding"/>
    <property type="evidence" value="ECO:0007669"/>
    <property type="project" value="InterPro"/>
</dbReference>
<dbReference type="GO" id="GO:0003910">
    <property type="term" value="F:DNA ligase (ATP) activity"/>
    <property type="evidence" value="ECO:0007669"/>
    <property type="project" value="UniProtKB-EC"/>
</dbReference>
<dbReference type="GO" id="GO:0006310">
    <property type="term" value="P:DNA recombination"/>
    <property type="evidence" value="ECO:0007669"/>
    <property type="project" value="InterPro"/>
</dbReference>
<dbReference type="GO" id="GO:0006281">
    <property type="term" value="P:DNA repair"/>
    <property type="evidence" value="ECO:0007669"/>
    <property type="project" value="InterPro"/>
</dbReference>
<dbReference type="CDD" id="cd07905">
    <property type="entry name" value="Adenylation_DNA_ligase_LigC"/>
    <property type="match status" value="1"/>
</dbReference>
<dbReference type="CDD" id="cd07970">
    <property type="entry name" value="OBF_DNA_ligase_LigC"/>
    <property type="match status" value="1"/>
</dbReference>
<dbReference type="Gene3D" id="3.30.470.30">
    <property type="entry name" value="DNA ligase/mRNA capping enzyme"/>
    <property type="match status" value="1"/>
</dbReference>
<dbReference type="Gene3D" id="2.40.50.140">
    <property type="entry name" value="Nucleic acid-binding proteins"/>
    <property type="match status" value="1"/>
</dbReference>
<dbReference type="InterPro" id="IPR044119">
    <property type="entry name" value="Adenylation_LigC-like"/>
</dbReference>
<dbReference type="InterPro" id="IPR050191">
    <property type="entry name" value="ATP-dep_DNA_ligase"/>
</dbReference>
<dbReference type="InterPro" id="IPR012309">
    <property type="entry name" value="DNA_ligase_ATP-dep_C"/>
</dbReference>
<dbReference type="InterPro" id="IPR012310">
    <property type="entry name" value="DNA_ligase_ATP-dep_cent"/>
</dbReference>
<dbReference type="InterPro" id="IPR016059">
    <property type="entry name" value="DNA_ligase_ATP-dep_CS"/>
</dbReference>
<dbReference type="InterPro" id="IPR012340">
    <property type="entry name" value="NA-bd_OB-fold"/>
</dbReference>
<dbReference type="InterPro" id="IPR044117">
    <property type="entry name" value="OBF_LigC-like"/>
</dbReference>
<dbReference type="NCBIfam" id="NF006078">
    <property type="entry name" value="PRK08224.1"/>
    <property type="match status" value="1"/>
</dbReference>
<dbReference type="PANTHER" id="PTHR45674:SF4">
    <property type="entry name" value="DNA LIGASE 1"/>
    <property type="match status" value="1"/>
</dbReference>
<dbReference type="PANTHER" id="PTHR45674">
    <property type="entry name" value="DNA LIGASE 1/3 FAMILY MEMBER"/>
    <property type="match status" value="1"/>
</dbReference>
<dbReference type="Pfam" id="PF04679">
    <property type="entry name" value="DNA_ligase_A_C"/>
    <property type="match status" value="1"/>
</dbReference>
<dbReference type="Pfam" id="PF01068">
    <property type="entry name" value="DNA_ligase_A_M"/>
    <property type="match status" value="1"/>
</dbReference>
<dbReference type="SUPFAM" id="SSF56091">
    <property type="entry name" value="DNA ligase/mRNA capping enzyme, catalytic domain"/>
    <property type="match status" value="1"/>
</dbReference>
<dbReference type="SUPFAM" id="SSF50249">
    <property type="entry name" value="Nucleic acid-binding proteins"/>
    <property type="match status" value="1"/>
</dbReference>
<dbReference type="PROSITE" id="PS00697">
    <property type="entry name" value="DNA_LIGASE_A1"/>
    <property type="match status" value="1"/>
</dbReference>
<evidence type="ECO:0000250" key="1"/>
<evidence type="ECO:0000255" key="2">
    <source>
        <dbReference type="PROSITE-ProRule" id="PRU10135"/>
    </source>
</evidence>
<evidence type="ECO:0000269" key="3">
    <source>
    </source>
</evidence>
<evidence type="ECO:0000269" key="4">
    <source>
    </source>
</evidence>
<evidence type="ECO:0000269" key="5">
    <source>
    </source>
</evidence>
<evidence type="ECO:0000305" key="6"/>
<keyword id="KW-0436">Ligase</keyword>
<keyword id="KW-1185">Reference proteome</keyword>
<proteinExistence type="evidence at protein level"/>
<feature type="chain" id="PRO_0000425951" description="DNA ligase C1">
    <location>
        <begin position="1"/>
        <end position="348"/>
    </location>
</feature>
<feature type="active site" description="N6-AMP-lysine intermediate" evidence="6">
    <location>
        <position position="32"/>
    </location>
</feature>
<reference key="1">
    <citation type="submission" date="2006-10" db="EMBL/GenBank/DDBJ databases">
        <authorList>
            <person name="Fleischmann R.D."/>
            <person name="Dodson R.J."/>
            <person name="Haft D.H."/>
            <person name="Merkel J.S."/>
            <person name="Nelson W.C."/>
            <person name="Fraser C.M."/>
        </authorList>
    </citation>
    <scope>NUCLEOTIDE SEQUENCE [LARGE SCALE GENOMIC DNA]</scope>
    <source>
        <strain>ATCC 700084 / mc(2)155</strain>
    </source>
</reference>
<reference key="2">
    <citation type="journal article" date="2007" name="Genome Biol.">
        <title>Interrupted coding sequences in Mycobacterium smegmatis: authentic mutations or sequencing errors?</title>
        <authorList>
            <person name="Deshayes C."/>
            <person name="Perrodou E."/>
            <person name="Gallien S."/>
            <person name="Euphrasie D."/>
            <person name="Schaeffer C."/>
            <person name="Van-Dorsselaer A."/>
            <person name="Poch O."/>
            <person name="Lecompte O."/>
            <person name="Reyrat J.-M."/>
        </authorList>
    </citation>
    <scope>NUCLEOTIDE SEQUENCE [LARGE SCALE GENOMIC DNA]</scope>
    <source>
        <strain>ATCC 700084 / mc(2)155</strain>
    </source>
</reference>
<reference key="3">
    <citation type="journal article" date="2009" name="Genome Res.">
        <title>Ortho-proteogenomics: multiple proteomes investigation through orthology and a new MS-based protocol.</title>
        <authorList>
            <person name="Gallien S."/>
            <person name="Perrodou E."/>
            <person name="Carapito C."/>
            <person name="Deshayes C."/>
            <person name="Reyrat J.-M."/>
            <person name="Van Dorsselaer A."/>
            <person name="Poch O."/>
            <person name="Schaeffer C."/>
            <person name="Lecompte O."/>
        </authorList>
    </citation>
    <scope>NUCLEOTIDE SEQUENCE [LARGE SCALE GENOMIC DNA]</scope>
    <source>
        <strain>ATCC 700084 / mc(2)155</strain>
    </source>
</reference>
<reference key="4">
    <citation type="journal article" date="2004" name="J. Biol. Chem.">
        <title>Biochemical and genetic analysis of the four DNA ligases of mycobacteria.</title>
        <authorList>
            <person name="Gong C."/>
            <person name="Martins A."/>
            <person name="Bongiorno P."/>
            <person name="Glickman M."/>
            <person name="Shuman S."/>
        </authorList>
    </citation>
    <scope>FUNCTION</scope>
    <scope>COFACTOR</scope>
    <scope>SUBUNIT</scope>
</reference>
<reference key="5">
    <citation type="journal article" date="2005" name="Nat. Struct. Mol. Biol.">
        <title>Mechanism of nonhomologous end-joining in mycobacteria: a low-fidelity repair system driven by Ku, ligase D and ligase C.</title>
        <authorList>
            <person name="Gong C."/>
            <person name="Bongiorno P."/>
            <person name="Martins A."/>
            <person name="Stephanou N.C."/>
            <person name="Zhu H."/>
            <person name="Shuman S."/>
            <person name="Glickman M.S."/>
        </authorList>
    </citation>
    <scope>DISRUPTION PHENOTYPE</scope>
    <source>
        <strain>ATCC 700084 / mc(2)155</strain>
    </source>
</reference>
<reference key="6">
    <citation type="journal article" date="2008" name="Genes Dev.">
        <title>The pathways and outcomes of mycobacterial NHEJ depend on the structure of the broken DNA ends.</title>
        <authorList>
            <person name="Aniukwu J."/>
            <person name="Glickman M.S."/>
            <person name="Shuman S."/>
        </authorList>
    </citation>
    <scope>FUNCTION</scope>
    <scope>DISRUPTION PHENOTYPE</scope>
    <source>
        <strain>ATCC 700084 / mc(2)155</strain>
    </source>
</reference>
<gene>
    <name type="primary">ligC</name>
    <name type="ordered locus">MSMEG_6302</name>
    <name type="ordered locus">MSMEI_6137</name>
</gene>
<organism>
    <name type="scientific">Mycolicibacterium smegmatis (strain ATCC 700084 / mc(2)155)</name>
    <name type="common">Mycobacterium smegmatis</name>
    <dbReference type="NCBI Taxonomy" id="246196"/>
    <lineage>
        <taxon>Bacteria</taxon>
        <taxon>Bacillati</taxon>
        <taxon>Actinomycetota</taxon>
        <taxon>Actinomycetes</taxon>
        <taxon>Mycobacteriales</taxon>
        <taxon>Mycobacteriaceae</taxon>
        <taxon>Mycolicibacterium</taxon>
    </lineage>
</organism>
<name>LIGC1_MYCS2</name>